<feature type="chain" id="PRO_0000325175" description="Shikimate dehydrogenase (NADP(+))">
    <location>
        <begin position="1"/>
        <end position="288"/>
    </location>
</feature>
<feature type="active site" description="Proton acceptor" evidence="1">
    <location>
        <position position="73"/>
    </location>
</feature>
<feature type="binding site" evidence="1">
    <location>
        <begin position="22"/>
        <end position="24"/>
    </location>
    <ligand>
        <name>shikimate</name>
        <dbReference type="ChEBI" id="CHEBI:36208"/>
    </ligand>
</feature>
<feature type="binding site" evidence="1">
    <location>
        <position position="69"/>
    </location>
    <ligand>
        <name>shikimate</name>
        <dbReference type="ChEBI" id="CHEBI:36208"/>
    </ligand>
</feature>
<feature type="binding site" evidence="1">
    <location>
        <position position="94"/>
    </location>
    <ligand>
        <name>shikimate</name>
        <dbReference type="ChEBI" id="CHEBI:36208"/>
    </ligand>
</feature>
<feature type="binding site" evidence="1">
    <location>
        <position position="110"/>
    </location>
    <ligand>
        <name>shikimate</name>
        <dbReference type="ChEBI" id="CHEBI:36208"/>
    </ligand>
</feature>
<feature type="binding site" evidence="1">
    <location>
        <begin position="131"/>
        <end position="135"/>
    </location>
    <ligand>
        <name>NADP(+)</name>
        <dbReference type="ChEBI" id="CHEBI:58349"/>
    </ligand>
</feature>
<feature type="binding site" evidence="1">
    <location>
        <position position="228"/>
    </location>
    <ligand>
        <name>NADP(+)</name>
        <dbReference type="ChEBI" id="CHEBI:58349"/>
    </ligand>
</feature>
<feature type="binding site" evidence="1">
    <location>
        <position position="230"/>
    </location>
    <ligand>
        <name>shikimate</name>
        <dbReference type="ChEBI" id="CHEBI:36208"/>
    </ligand>
</feature>
<feature type="binding site" evidence="1">
    <location>
        <position position="251"/>
    </location>
    <ligand>
        <name>NADP(+)</name>
        <dbReference type="ChEBI" id="CHEBI:58349"/>
    </ligand>
</feature>
<proteinExistence type="inferred from homology"/>
<reference key="1">
    <citation type="journal article" date="2007" name="ISME J.">
        <title>Population level functional diversity in a microbial community revealed by comparative genomic and metagenomic analyses.</title>
        <authorList>
            <person name="Bhaya D."/>
            <person name="Grossman A.R."/>
            <person name="Steunou A.-S."/>
            <person name="Khuri N."/>
            <person name="Cohan F.M."/>
            <person name="Hamamura N."/>
            <person name="Melendrez M.C."/>
            <person name="Bateson M.M."/>
            <person name="Ward D.M."/>
            <person name="Heidelberg J.F."/>
        </authorList>
    </citation>
    <scope>NUCLEOTIDE SEQUENCE [LARGE SCALE GENOMIC DNA]</scope>
    <source>
        <strain>JA-2-3B'a(2-13)</strain>
    </source>
</reference>
<organism>
    <name type="scientific">Synechococcus sp. (strain JA-2-3B'a(2-13))</name>
    <name type="common">Cyanobacteria bacterium Yellowstone B-Prime</name>
    <dbReference type="NCBI Taxonomy" id="321332"/>
    <lineage>
        <taxon>Bacteria</taxon>
        <taxon>Bacillati</taxon>
        <taxon>Cyanobacteriota</taxon>
        <taxon>Cyanophyceae</taxon>
        <taxon>Synechococcales</taxon>
        <taxon>Synechococcaceae</taxon>
        <taxon>Synechococcus</taxon>
    </lineage>
</organism>
<evidence type="ECO:0000255" key="1">
    <source>
        <dbReference type="HAMAP-Rule" id="MF_00222"/>
    </source>
</evidence>
<accession>Q2JMQ3</accession>
<gene>
    <name evidence="1" type="primary">aroE</name>
    <name type="ordered locus">CYB_1006</name>
</gene>
<sequence length="288" mass="29952">MDGRISGSTQLLGLIGDPVAHSLSPAMHNAALAAMGENYCYVPFPVAPKHLAAAVAGLAAIGVRGFNVTIPHKQAILPLLDQIESRAAAVGAVNTVYPLPEGGWAGTNTDIDGFVQPLLGLEKGIPTLILGSGGAARAAIQGCLELGLGPVRVAGRSPNSLLALQQTWPQVETVNWAELNCYLSQTRLLVNTTPVGMHKPGSPAGQGLSPLSREQLGLLSPGAIVYDLIYVPDPTPLLRMAAELGHTPISGLEMLVHQGAKALSLWLGGKPVPVEVMRQAAQHQLAQV</sequence>
<name>AROE_SYNJB</name>
<protein>
    <recommendedName>
        <fullName evidence="1">Shikimate dehydrogenase (NADP(+))</fullName>
        <shortName evidence="1">SDH</shortName>
        <ecNumber evidence="1">1.1.1.25</ecNumber>
    </recommendedName>
</protein>
<keyword id="KW-0028">Amino-acid biosynthesis</keyword>
<keyword id="KW-0057">Aromatic amino acid biosynthesis</keyword>
<keyword id="KW-0521">NADP</keyword>
<keyword id="KW-0560">Oxidoreductase</keyword>
<keyword id="KW-1185">Reference proteome</keyword>
<dbReference type="EC" id="1.1.1.25" evidence="1"/>
<dbReference type="EMBL" id="CP000240">
    <property type="protein sequence ID" value="ABD01984.1"/>
    <property type="molecule type" value="Genomic_DNA"/>
</dbReference>
<dbReference type="RefSeq" id="WP_011432639.1">
    <property type="nucleotide sequence ID" value="NC_007776.1"/>
</dbReference>
<dbReference type="SMR" id="Q2JMQ3"/>
<dbReference type="STRING" id="321332.CYB_1006"/>
<dbReference type="KEGG" id="cyb:CYB_1006"/>
<dbReference type="eggNOG" id="COG0169">
    <property type="taxonomic scope" value="Bacteria"/>
</dbReference>
<dbReference type="HOGENOM" id="CLU_044063_4_1_3"/>
<dbReference type="OrthoDB" id="9792692at2"/>
<dbReference type="UniPathway" id="UPA00053">
    <property type="reaction ID" value="UER00087"/>
</dbReference>
<dbReference type="Proteomes" id="UP000001938">
    <property type="component" value="Chromosome"/>
</dbReference>
<dbReference type="GO" id="GO:0005829">
    <property type="term" value="C:cytosol"/>
    <property type="evidence" value="ECO:0007669"/>
    <property type="project" value="TreeGrafter"/>
</dbReference>
<dbReference type="GO" id="GO:0050661">
    <property type="term" value="F:NADP binding"/>
    <property type="evidence" value="ECO:0007669"/>
    <property type="project" value="TreeGrafter"/>
</dbReference>
<dbReference type="GO" id="GO:0004764">
    <property type="term" value="F:shikimate 3-dehydrogenase (NADP+) activity"/>
    <property type="evidence" value="ECO:0007669"/>
    <property type="project" value="UniProtKB-UniRule"/>
</dbReference>
<dbReference type="GO" id="GO:0008652">
    <property type="term" value="P:amino acid biosynthetic process"/>
    <property type="evidence" value="ECO:0007669"/>
    <property type="project" value="UniProtKB-KW"/>
</dbReference>
<dbReference type="GO" id="GO:0009073">
    <property type="term" value="P:aromatic amino acid family biosynthetic process"/>
    <property type="evidence" value="ECO:0007669"/>
    <property type="project" value="UniProtKB-KW"/>
</dbReference>
<dbReference type="GO" id="GO:0009423">
    <property type="term" value="P:chorismate biosynthetic process"/>
    <property type="evidence" value="ECO:0007669"/>
    <property type="project" value="UniProtKB-UniRule"/>
</dbReference>
<dbReference type="GO" id="GO:0019632">
    <property type="term" value="P:shikimate metabolic process"/>
    <property type="evidence" value="ECO:0007669"/>
    <property type="project" value="TreeGrafter"/>
</dbReference>
<dbReference type="CDD" id="cd01065">
    <property type="entry name" value="NAD_bind_Shikimate_DH"/>
    <property type="match status" value="1"/>
</dbReference>
<dbReference type="Gene3D" id="3.40.50.10860">
    <property type="entry name" value="Leucine Dehydrogenase, chain A, domain 1"/>
    <property type="match status" value="1"/>
</dbReference>
<dbReference type="Gene3D" id="3.40.50.720">
    <property type="entry name" value="NAD(P)-binding Rossmann-like Domain"/>
    <property type="match status" value="1"/>
</dbReference>
<dbReference type="HAMAP" id="MF_00222">
    <property type="entry name" value="Shikimate_DH_AroE"/>
    <property type="match status" value="1"/>
</dbReference>
<dbReference type="InterPro" id="IPR046346">
    <property type="entry name" value="Aminoacid_DH-like_N_sf"/>
</dbReference>
<dbReference type="InterPro" id="IPR036291">
    <property type="entry name" value="NAD(P)-bd_dom_sf"/>
</dbReference>
<dbReference type="InterPro" id="IPR041121">
    <property type="entry name" value="SDH_C"/>
</dbReference>
<dbReference type="InterPro" id="IPR013708">
    <property type="entry name" value="Shikimate_DH-bd_N"/>
</dbReference>
<dbReference type="InterPro" id="IPR022893">
    <property type="entry name" value="Shikimate_DH_fam"/>
</dbReference>
<dbReference type="NCBIfam" id="NF001314">
    <property type="entry name" value="PRK00258.2-2"/>
    <property type="match status" value="1"/>
</dbReference>
<dbReference type="PANTHER" id="PTHR21089:SF1">
    <property type="entry name" value="BIFUNCTIONAL 3-DEHYDROQUINATE DEHYDRATASE_SHIKIMATE DEHYDROGENASE, CHLOROPLASTIC"/>
    <property type="match status" value="1"/>
</dbReference>
<dbReference type="PANTHER" id="PTHR21089">
    <property type="entry name" value="SHIKIMATE DEHYDROGENASE"/>
    <property type="match status" value="1"/>
</dbReference>
<dbReference type="Pfam" id="PF18317">
    <property type="entry name" value="SDH_C"/>
    <property type="match status" value="1"/>
</dbReference>
<dbReference type="Pfam" id="PF08501">
    <property type="entry name" value="Shikimate_dh_N"/>
    <property type="match status" value="1"/>
</dbReference>
<dbReference type="SUPFAM" id="SSF53223">
    <property type="entry name" value="Aminoacid dehydrogenase-like, N-terminal domain"/>
    <property type="match status" value="1"/>
</dbReference>
<dbReference type="SUPFAM" id="SSF51735">
    <property type="entry name" value="NAD(P)-binding Rossmann-fold domains"/>
    <property type="match status" value="1"/>
</dbReference>
<comment type="function">
    <text evidence="1">Involved in the biosynthesis of the chorismate, which leads to the biosynthesis of aromatic amino acids. Catalyzes the reversible NADPH linked reduction of 3-dehydroshikimate (DHSA) to yield shikimate (SA).</text>
</comment>
<comment type="catalytic activity">
    <reaction evidence="1">
        <text>shikimate + NADP(+) = 3-dehydroshikimate + NADPH + H(+)</text>
        <dbReference type="Rhea" id="RHEA:17737"/>
        <dbReference type="ChEBI" id="CHEBI:15378"/>
        <dbReference type="ChEBI" id="CHEBI:16630"/>
        <dbReference type="ChEBI" id="CHEBI:36208"/>
        <dbReference type="ChEBI" id="CHEBI:57783"/>
        <dbReference type="ChEBI" id="CHEBI:58349"/>
        <dbReference type="EC" id="1.1.1.25"/>
    </reaction>
</comment>
<comment type="pathway">
    <text evidence="1">Metabolic intermediate biosynthesis; chorismate biosynthesis; chorismate from D-erythrose 4-phosphate and phosphoenolpyruvate: step 4/7.</text>
</comment>
<comment type="subunit">
    <text evidence="1">Homodimer.</text>
</comment>
<comment type="similarity">
    <text evidence="1">Belongs to the shikimate dehydrogenase family.</text>
</comment>